<organism>
    <name type="scientific">Neisseria meningitidis serogroup B (strain ATCC BAA-335 / MC58)</name>
    <dbReference type="NCBI Taxonomy" id="122586"/>
    <lineage>
        <taxon>Bacteria</taxon>
        <taxon>Pseudomonadati</taxon>
        <taxon>Pseudomonadota</taxon>
        <taxon>Betaproteobacteria</taxon>
        <taxon>Neisseriales</taxon>
        <taxon>Neisseriaceae</taxon>
        <taxon>Neisseria</taxon>
    </lineage>
</organism>
<comment type="catalytic activity">
    <reaction evidence="1">
        <text>2-formamido-N(1)-(5-O-phospho-beta-D-ribosyl)acetamidine + ATP = 5-amino-1-(5-phospho-beta-D-ribosyl)imidazole + ADP + phosphate + H(+)</text>
        <dbReference type="Rhea" id="RHEA:23032"/>
        <dbReference type="ChEBI" id="CHEBI:15378"/>
        <dbReference type="ChEBI" id="CHEBI:30616"/>
        <dbReference type="ChEBI" id="CHEBI:43474"/>
        <dbReference type="ChEBI" id="CHEBI:137981"/>
        <dbReference type="ChEBI" id="CHEBI:147287"/>
        <dbReference type="ChEBI" id="CHEBI:456216"/>
        <dbReference type="EC" id="6.3.3.1"/>
    </reaction>
</comment>
<comment type="pathway">
    <text evidence="1">Purine metabolism; IMP biosynthesis via de novo pathway; 5-amino-1-(5-phospho-D-ribosyl)imidazole from N(2)-formyl-N(1)-(5-phospho-D-ribosyl)glycinamide: step 2/2.</text>
</comment>
<comment type="subcellular location">
    <subcellularLocation>
        <location evidence="1">Cytoplasm</location>
    </subcellularLocation>
</comment>
<comment type="similarity">
    <text evidence="1">Belongs to the AIR synthase family.</text>
</comment>
<accession>Q9JZ80</accession>
<proteinExistence type="inferred from homology"/>
<protein>
    <recommendedName>
        <fullName evidence="1">Phosphoribosylformylglycinamidine cyclo-ligase</fullName>
        <ecNumber evidence="1">6.3.3.1</ecNumber>
    </recommendedName>
    <alternativeName>
        <fullName evidence="1">AIR synthase</fullName>
    </alternativeName>
    <alternativeName>
        <fullName evidence="1">AIRS</fullName>
    </alternativeName>
    <alternativeName>
        <fullName evidence="1">Phosphoribosyl-aminoimidazole synthetase</fullName>
    </alternativeName>
</protein>
<keyword id="KW-0067">ATP-binding</keyword>
<keyword id="KW-0963">Cytoplasm</keyword>
<keyword id="KW-0436">Ligase</keyword>
<keyword id="KW-0547">Nucleotide-binding</keyword>
<keyword id="KW-0658">Purine biosynthesis</keyword>
<keyword id="KW-1185">Reference proteome</keyword>
<evidence type="ECO:0000255" key="1">
    <source>
        <dbReference type="HAMAP-Rule" id="MF_00741"/>
    </source>
</evidence>
<name>PUR5_NEIMB</name>
<gene>
    <name evidence="1" type="primary">purM</name>
    <name type="ordered locus">NMB1252</name>
</gene>
<feature type="chain" id="PRO_0000148225" description="Phosphoribosylformylglycinamidine cyclo-ligase">
    <location>
        <begin position="1"/>
        <end position="344"/>
    </location>
</feature>
<reference key="1">
    <citation type="journal article" date="2000" name="Science">
        <title>Complete genome sequence of Neisseria meningitidis serogroup B strain MC58.</title>
        <authorList>
            <person name="Tettelin H."/>
            <person name="Saunders N.J."/>
            <person name="Heidelberg J.F."/>
            <person name="Jeffries A.C."/>
            <person name="Nelson K.E."/>
            <person name="Eisen J.A."/>
            <person name="Ketchum K.A."/>
            <person name="Hood D.W."/>
            <person name="Peden J.F."/>
            <person name="Dodson R.J."/>
            <person name="Nelson W.C."/>
            <person name="Gwinn M.L."/>
            <person name="DeBoy R.T."/>
            <person name="Peterson J.D."/>
            <person name="Hickey E.K."/>
            <person name="Haft D.H."/>
            <person name="Salzberg S.L."/>
            <person name="White O."/>
            <person name="Fleischmann R.D."/>
            <person name="Dougherty B.A."/>
            <person name="Mason T.M."/>
            <person name="Ciecko A."/>
            <person name="Parksey D.S."/>
            <person name="Blair E."/>
            <person name="Cittone H."/>
            <person name="Clark E.B."/>
            <person name="Cotton M.D."/>
            <person name="Utterback T.R."/>
            <person name="Khouri H.M."/>
            <person name="Qin H."/>
            <person name="Vamathevan J.J."/>
            <person name="Gill J."/>
            <person name="Scarlato V."/>
            <person name="Masignani V."/>
            <person name="Pizza M."/>
            <person name="Grandi G."/>
            <person name="Sun L."/>
            <person name="Smith H.O."/>
            <person name="Fraser C.M."/>
            <person name="Moxon E.R."/>
            <person name="Rappuoli R."/>
            <person name="Venter J.C."/>
        </authorList>
    </citation>
    <scope>NUCLEOTIDE SEQUENCE [LARGE SCALE GENOMIC DNA]</scope>
    <source>
        <strain>ATCC BAA-335 / MC58</strain>
    </source>
</reference>
<dbReference type="EC" id="6.3.3.1" evidence="1"/>
<dbReference type="EMBL" id="AE002098">
    <property type="protein sequence ID" value="AAF41632.1"/>
    <property type="molecule type" value="Genomic_DNA"/>
</dbReference>
<dbReference type="PIR" id="E81104">
    <property type="entry name" value="E81104"/>
</dbReference>
<dbReference type="RefSeq" id="NP_274275.1">
    <property type="nucleotide sequence ID" value="NC_003112.2"/>
</dbReference>
<dbReference type="RefSeq" id="WP_002222409.1">
    <property type="nucleotide sequence ID" value="NC_003112.2"/>
</dbReference>
<dbReference type="SMR" id="Q9JZ80"/>
<dbReference type="FunCoup" id="Q9JZ80">
    <property type="interactions" value="482"/>
</dbReference>
<dbReference type="STRING" id="122586.NMB1252"/>
<dbReference type="PaxDb" id="122586-NMB1252"/>
<dbReference type="KEGG" id="nme:NMB1252"/>
<dbReference type="PATRIC" id="fig|122586.8.peg.1565"/>
<dbReference type="HOGENOM" id="CLU_047116_0_0_4"/>
<dbReference type="InParanoid" id="Q9JZ80"/>
<dbReference type="OrthoDB" id="9777881at2"/>
<dbReference type="UniPathway" id="UPA00074">
    <property type="reaction ID" value="UER00129"/>
</dbReference>
<dbReference type="Proteomes" id="UP000000425">
    <property type="component" value="Chromosome"/>
</dbReference>
<dbReference type="GO" id="GO:0005829">
    <property type="term" value="C:cytosol"/>
    <property type="evidence" value="ECO:0000318"/>
    <property type="project" value="GO_Central"/>
</dbReference>
<dbReference type="GO" id="GO:0005524">
    <property type="term" value="F:ATP binding"/>
    <property type="evidence" value="ECO:0007669"/>
    <property type="project" value="UniProtKB-KW"/>
</dbReference>
<dbReference type="GO" id="GO:0004637">
    <property type="term" value="F:phosphoribosylamine-glycine ligase activity"/>
    <property type="evidence" value="ECO:0000318"/>
    <property type="project" value="GO_Central"/>
</dbReference>
<dbReference type="GO" id="GO:0004641">
    <property type="term" value="F:phosphoribosylformylglycinamidine cyclo-ligase activity"/>
    <property type="evidence" value="ECO:0000318"/>
    <property type="project" value="GO_Central"/>
</dbReference>
<dbReference type="GO" id="GO:0006189">
    <property type="term" value="P:'de novo' IMP biosynthetic process"/>
    <property type="evidence" value="ECO:0007669"/>
    <property type="project" value="UniProtKB-UniRule"/>
</dbReference>
<dbReference type="GO" id="GO:0046084">
    <property type="term" value="P:adenine biosynthetic process"/>
    <property type="evidence" value="ECO:0000318"/>
    <property type="project" value="GO_Central"/>
</dbReference>
<dbReference type="GO" id="GO:0006164">
    <property type="term" value="P:purine nucleotide biosynthetic process"/>
    <property type="evidence" value="ECO:0000318"/>
    <property type="project" value="GO_Central"/>
</dbReference>
<dbReference type="CDD" id="cd02196">
    <property type="entry name" value="PurM"/>
    <property type="match status" value="1"/>
</dbReference>
<dbReference type="FunFam" id="3.30.1330.10:FF:000001">
    <property type="entry name" value="Phosphoribosylformylglycinamidine cyclo-ligase"/>
    <property type="match status" value="1"/>
</dbReference>
<dbReference type="FunFam" id="3.90.650.10:FF:000001">
    <property type="entry name" value="Phosphoribosylformylglycinamidine cyclo-ligase"/>
    <property type="match status" value="1"/>
</dbReference>
<dbReference type="Gene3D" id="3.90.650.10">
    <property type="entry name" value="PurM-like C-terminal domain"/>
    <property type="match status" value="1"/>
</dbReference>
<dbReference type="Gene3D" id="3.30.1330.10">
    <property type="entry name" value="PurM-like, N-terminal domain"/>
    <property type="match status" value="1"/>
</dbReference>
<dbReference type="HAMAP" id="MF_00741">
    <property type="entry name" value="AIRS"/>
    <property type="match status" value="1"/>
</dbReference>
<dbReference type="InterPro" id="IPR010918">
    <property type="entry name" value="PurM-like_C_dom"/>
</dbReference>
<dbReference type="InterPro" id="IPR036676">
    <property type="entry name" value="PurM-like_C_sf"/>
</dbReference>
<dbReference type="InterPro" id="IPR016188">
    <property type="entry name" value="PurM-like_N"/>
</dbReference>
<dbReference type="InterPro" id="IPR036921">
    <property type="entry name" value="PurM-like_N_sf"/>
</dbReference>
<dbReference type="InterPro" id="IPR004733">
    <property type="entry name" value="PurM_cligase"/>
</dbReference>
<dbReference type="NCBIfam" id="TIGR00878">
    <property type="entry name" value="purM"/>
    <property type="match status" value="1"/>
</dbReference>
<dbReference type="PANTHER" id="PTHR10520:SF12">
    <property type="entry name" value="TRIFUNCTIONAL PURINE BIOSYNTHETIC PROTEIN ADENOSINE-3"/>
    <property type="match status" value="1"/>
</dbReference>
<dbReference type="PANTHER" id="PTHR10520">
    <property type="entry name" value="TRIFUNCTIONAL PURINE BIOSYNTHETIC PROTEIN ADENOSINE-3-RELATED"/>
    <property type="match status" value="1"/>
</dbReference>
<dbReference type="Pfam" id="PF00586">
    <property type="entry name" value="AIRS"/>
    <property type="match status" value="1"/>
</dbReference>
<dbReference type="Pfam" id="PF02769">
    <property type="entry name" value="AIRS_C"/>
    <property type="match status" value="1"/>
</dbReference>
<dbReference type="SUPFAM" id="SSF56042">
    <property type="entry name" value="PurM C-terminal domain-like"/>
    <property type="match status" value="1"/>
</dbReference>
<dbReference type="SUPFAM" id="SSF55326">
    <property type="entry name" value="PurM N-terminal domain-like"/>
    <property type="match status" value="1"/>
</dbReference>
<sequence length="344" mass="36974">MSTSLSYRDAGVDIDAGDQLVENIKPFAKRTMRPEVLGDLGGFGALVEIGKKYQNPVLVSGTDGVGTKLKLAFDWDKHDTVGIDLVAMSVNDILVQGAEPLFFLDYFACGKLDVPRATDVIKGIAQGCEESGCALIGGETAEMPGMYPVGEYDLAGFAVGVVEKENVITGRSIGVGDVVLGLASNGAHSNGYSLIRKIIERDNPDLDAEFDNGKTLREAVIAPTRLYVKPILAALEKFTIKGMAHITGGGITENVPRVLPENTVAQIDAKSWELPKLFQWLQKAGNVETQEMYRTFNCGIGMVVIVAAEDADAVQGLLGEQGETVYRLGLIRERQGDEHQTQVA</sequence>